<name>FOXN2_HUMAN</name>
<feature type="chain" id="PRO_0000091868" description="Forkhead box protein N2">
    <location>
        <begin position="1"/>
        <end position="431"/>
    </location>
</feature>
<feature type="DNA-binding region" description="Fork-head" evidence="1">
    <location>
        <begin position="112"/>
        <end position="208"/>
    </location>
</feature>
<feature type="region of interest" description="Disordered" evidence="2">
    <location>
        <begin position="364"/>
        <end position="387"/>
    </location>
</feature>
<feature type="splice variant" id="VSP_035743" description="In isoform 2." evidence="3">
    <location>
        <begin position="1"/>
        <end position="90"/>
    </location>
</feature>
<feature type="splice variant" id="VSP_035744" description="In isoform 2." evidence="3">
    <original>DDVPSFGPACYQNPE</original>
    <variation>MMCDPLDQLATRTQK</variation>
    <location>
        <begin position="91"/>
        <end position="105"/>
    </location>
</feature>
<keyword id="KW-0025">Alternative splicing</keyword>
<keyword id="KW-0238">DNA-binding</keyword>
<keyword id="KW-0539">Nucleus</keyword>
<keyword id="KW-1267">Proteomics identification</keyword>
<keyword id="KW-1185">Reference proteome</keyword>
<keyword id="KW-0804">Transcription</keyword>
<keyword id="KW-0805">Transcription regulation</keyword>
<dbReference type="EMBL" id="U57029">
    <property type="protein sequence ID" value="AAB03504.1"/>
    <property type="molecule type" value="mRNA"/>
</dbReference>
<dbReference type="EMBL" id="AC091485">
    <property type="protein sequence ID" value="AAY14813.1"/>
    <property type="molecule type" value="Genomic_DNA"/>
</dbReference>
<dbReference type="EMBL" id="BC063305">
    <property type="protein sequence ID" value="AAH63305.1"/>
    <property type="molecule type" value="mRNA"/>
</dbReference>
<dbReference type="CCDS" id="CCDS1838.1">
    <molecule id="P32314-1"/>
</dbReference>
<dbReference type="RefSeq" id="NP_001362371.1">
    <molecule id="P32314-1"/>
    <property type="nucleotide sequence ID" value="NM_001375442.1"/>
</dbReference>
<dbReference type="RefSeq" id="NP_001362372.1">
    <molecule id="P32314-1"/>
    <property type="nucleotide sequence ID" value="NM_001375443.1"/>
</dbReference>
<dbReference type="RefSeq" id="NP_001362373.1">
    <molecule id="P32314-1"/>
    <property type="nucleotide sequence ID" value="NM_001375444.1"/>
</dbReference>
<dbReference type="RefSeq" id="NP_001362374.1">
    <molecule id="P32314-1"/>
    <property type="nucleotide sequence ID" value="NM_001375445.1"/>
</dbReference>
<dbReference type="RefSeq" id="NP_001362375.1">
    <molecule id="P32314-1"/>
    <property type="nucleotide sequence ID" value="NM_001375446.1"/>
</dbReference>
<dbReference type="RefSeq" id="NP_001362376.1">
    <molecule id="P32314-1"/>
    <property type="nucleotide sequence ID" value="NM_001375447.1"/>
</dbReference>
<dbReference type="RefSeq" id="NP_001362377.1">
    <molecule id="P32314-1"/>
    <property type="nucleotide sequence ID" value="NM_001375448.1"/>
</dbReference>
<dbReference type="RefSeq" id="NP_001362378.1">
    <molecule id="P32314-1"/>
    <property type="nucleotide sequence ID" value="NM_001375449.1"/>
</dbReference>
<dbReference type="RefSeq" id="NP_001362379.1">
    <molecule id="P32314-1"/>
    <property type="nucleotide sequence ID" value="NM_001375450.1"/>
</dbReference>
<dbReference type="RefSeq" id="NP_001362380.1">
    <molecule id="P32314-1"/>
    <property type="nucleotide sequence ID" value="NM_001375451.1"/>
</dbReference>
<dbReference type="RefSeq" id="NP_001362381.1">
    <molecule id="P32314-1"/>
    <property type="nucleotide sequence ID" value="NM_001375452.1"/>
</dbReference>
<dbReference type="RefSeq" id="NP_002149.2">
    <molecule id="P32314-1"/>
    <property type="nucleotide sequence ID" value="NM_002158.3"/>
</dbReference>
<dbReference type="RefSeq" id="XP_005264339.1">
    <property type="nucleotide sequence ID" value="XM_005264282.2"/>
</dbReference>
<dbReference type="RefSeq" id="XP_005264340.1">
    <molecule id="P32314-1"/>
    <property type="nucleotide sequence ID" value="XM_005264283.3"/>
</dbReference>
<dbReference type="RefSeq" id="XP_006712064.1">
    <property type="nucleotide sequence ID" value="XM_006712001.3"/>
</dbReference>
<dbReference type="RefSeq" id="XP_006712065.1">
    <property type="nucleotide sequence ID" value="XM_006712002.3"/>
</dbReference>
<dbReference type="RefSeq" id="XP_011531110.1">
    <property type="nucleotide sequence ID" value="XM_011532808.2"/>
</dbReference>
<dbReference type="RefSeq" id="XP_016859445.1">
    <property type="nucleotide sequence ID" value="XM_017003956.1"/>
</dbReference>
<dbReference type="RefSeq" id="XP_016859446.1">
    <property type="nucleotide sequence ID" value="XM_017003957.1"/>
</dbReference>
<dbReference type="RefSeq" id="XP_016859447.1">
    <property type="nucleotide sequence ID" value="XM_017003958.1"/>
</dbReference>
<dbReference type="RefSeq" id="XP_016859448.1">
    <property type="nucleotide sequence ID" value="XM_017003959.1"/>
</dbReference>
<dbReference type="RefSeq" id="XP_047300060.1">
    <molecule id="P32314-1"/>
    <property type="nucleotide sequence ID" value="XM_047444104.1"/>
</dbReference>
<dbReference type="RefSeq" id="XP_047300061.1">
    <molecule id="P32314-1"/>
    <property type="nucleotide sequence ID" value="XM_047444105.1"/>
</dbReference>
<dbReference type="RefSeq" id="XP_047300062.1">
    <molecule id="P32314-1"/>
    <property type="nucleotide sequence ID" value="XM_047444106.1"/>
</dbReference>
<dbReference type="RefSeq" id="XP_047300063.1">
    <molecule id="P32314-1"/>
    <property type="nucleotide sequence ID" value="XM_047444107.1"/>
</dbReference>
<dbReference type="RefSeq" id="XP_047300064.1">
    <molecule id="P32314-1"/>
    <property type="nucleotide sequence ID" value="XM_047444108.1"/>
</dbReference>
<dbReference type="RefSeq" id="XP_047300065.1">
    <molecule id="P32314-1"/>
    <property type="nucleotide sequence ID" value="XM_047444109.1"/>
</dbReference>
<dbReference type="RefSeq" id="XP_047300066.1">
    <molecule id="P32314-1"/>
    <property type="nucleotide sequence ID" value="XM_047444110.1"/>
</dbReference>
<dbReference type="RefSeq" id="XP_047300067.1">
    <molecule id="P32314-1"/>
    <property type="nucleotide sequence ID" value="XM_047444111.1"/>
</dbReference>
<dbReference type="RefSeq" id="XP_054197658.1">
    <molecule id="P32314-1"/>
    <property type="nucleotide sequence ID" value="XM_054341683.1"/>
</dbReference>
<dbReference type="RefSeq" id="XP_054197659.1">
    <molecule id="P32314-1"/>
    <property type="nucleotide sequence ID" value="XM_054341684.1"/>
</dbReference>
<dbReference type="RefSeq" id="XP_054197660.1">
    <molecule id="P32314-1"/>
    <property type="nucleotide sequence ID" value="XM_054341685.1"/>
</dbReference>
<dbReference type="RefSeq" id="XP_054197661.1">
    <molecule id="P32314-1"/>
    <property type="nucleotide sequence ID" value="XM_054341686.1"/>
</dbReference>
<dbReference type="RefSeq" id="XP_054197662.1">
    <molecule id="P32314-1"/>
    <property type="nucleotide sequence ID" value="XM_054341687.1"/>
</dbReference>
<dbReference type="RefSeq" id="XP_054197663.1">
    <molecule id="P32314-1"/>
    <property type="nucleotide sequence ID" value="XM_054341688.1"/>
</dbReference>
<dbReference type="RefSeq" id="XP_054197664.1">
    <molecule id="P32314-1"/>
    <property type="nucleotide sequence ID" value="XM_054341689.1"/>
</dbReference>
<dbReference type="RefSeq" id="XP_054197665.1">
    <molecule id="P32314-1"/>
    <property type="nucleotide sequence ID" value="XM_054341690.1"/>
</dbReference>
<dbReference type="RefSeq" id="XP_054197666.1">
    <molecule id="P32314-1"/>
    <property type="nucleotide sequence ID" value="XM_054341691.1"/>
</dbReference>
<dbReference type="SMR" id="P32314"/>
<dbReference type="BioGRID" id="109576">
    <property type="interactions" value="18"/>
</dbReference>
<dbReference type="FunCoup" id="P32314">
    <property type="interactions" value="2616"/>
</dbReference>
<dbReference type="IntAct" id="P32314">
    <property type="interactions" value="10"/>
</dbReference>
<dbReference type="MINT" id="P32314"/>
<dbReference type="STRING" id="9606.ENSP00000343633"/>
<dbReference type="GlyGen" id="P32314">
    <property type="glycosylation" value="1 site, 1 O-linked glycan (1 site)"/>
</dbReference>
<dbReference type="iPTMnet" id="P32314"/>
<dbReference type="PhosphoSitePlus" id="P32314"/>
<dbReference type="BioMuta" id="FOXN2"/>
<dbReference type="DMDM" id="215274148"/>
<dbReference type="jPOST" id="P32314"/>
<dbReference type="MassIVE" id="P32314"/>
<dbReference type="PaxDb" id="9606-ENSP00000343633"/>
<dbReference type="PeptideAtlas" id="P32314"/>
<dbReference type="ProteomicsDB" id="54867">
    <molecule id="P32314-1"/>
</dbReference>
<dbReference type="ProteomicsDB" id="54868">
    <molecule id="P32314-2"/>
</dbReference>
<dbReference type="Antibodypedia" id="932">
    <property type="antibodies" value="300 antibodies from 27 providers"/>
</dbReference>
<dbReference type="DNASU" id="3344"/>
<dbReference type="Ensembl" id="ENST00000340553.8">
    <molecule id="P32314-1"/>
    <property type="protein sequence ID" value="ENSP00000343633.3"/>
    <property type="gene ID" value="ENSG00000170802.17"/>
</dbReference>
<dbReference type="GeneID" id="3344"/>
<dbReference type="KEGG" id="hsa:3344"/>
<dbReference type="MANE-Select" id="ENST00000340553.8">
    <property type="protein sequence ID" value="ENSP00000343633.3"/>
    <property type="RefSeq nucleotide sequence ID" value="NM_002158.4"/>
    <property type="RefSeq protein sequence ID" value="NP_002149.2"/>
</dbReference>
<dbReference type="UCSC" id="uc002rwh.2">
    <molecule id="P32314-1"/>
    <property type="organism name" value="human"/>
</dbReference>
<dbReference type="AGR" id="HGNC:5281"/>
<dbReference type="CTD" id="3344"/>
<dbReference type="DisGeNET" id="3344"/>
<dbReference type="GeneCards" id="FOXN2"/>
<dbReference type="HGNC" id="HGNC:5281">
    <property type="gene designation" value="FOXN2"/>
</dbReference>
<dbReference type="HPA" id="ENSG00000170802">
    <property type="expression patterns" value="Tissue enhanced (bone)"/>
</dbReference>
<dbReference type="MIM" id="143089">
    <property type="type" value="gene"/>
</dbReference>
<dbReference type="neXtProt" id="NX_P32314"/>
<dbReference type="OpenTargets" id="ENSG00000170802"/>
<dbReference type="PharmGKB" id="PA162388822"/>
<dbReference type="VEuPathDB" id="HostDB:ENSG00000170802"/>
<dbReference type="eggNOG" id="KOG2294">
    <property type="taxonomic scope" value="Eukaryota"/>
</dbReference>
<dbReference type="GeneTree" id="ENSGT00940000159118"/>
<dbReference type="HOGENOM" id="CLU_032050_1_0_1"/>
<dbReference type="InParanoid" id="P32314"/>
<dbReference type="OMA" id="GYVSQPC"/>
<dbReference type="OrthoDB" id="5954824at2759"/>
<dbReference type="PAN-GO" id="P32314">
    <property type="GO annotations" value="4 GO annotations based on evolutionary models"/>
</dbReference>
<dbReference type="PhylomeDB" id="P32314"/>
<dbReference type="TreeFam" id="TF105083"/>
<dbReference type="PathwayCommons" id="P32314"/>
<dbReference type="SignaLink" id="P32314"/>
<dbReference type="SIGNOR" id="P32314"/>
<dbReference type="BioGRID-ORCS" id="3344">
    <property type="hits" value="18 hits in 1179 CRISPR screens"/>
</dbReference>
<dbReference type="ChiTaRS" id="FOXN2">
    <property type="organism name" value="human"/>
</dbReference>
<dbReference type="GenomeRNAi" id="3344"/>
<dbReference type="Pharos" id="P32314">
    <property type="development level" value="Tbio"/>
</dbReference>
<dbReference type="PRO" id="PR:P32314"/>
<dbReference type="Proteomes" id="UP000005640">
    <property type="component" value="Chromosome 2"/>
</dbReference>
<dbReference type="RNAct" id="P32314">
    <property type="molecule type" value="protein"/>
</dbReference>
<dbReference type="Bgee" id="ENSG00000170802">
    <property type="expression patterns" value="Expressed in endothelial cell and 189 other cell types or tissues"/>
</dbReference>
<dbReference type="ExpressionAtlas" id="P32314">
    <property type="expression patterns" value="baseline and differential"/>
</dbReference>
<dbReference type="GO" id="GO:0000785">
    <property type="term" value="C:chromatin"/>
    <property type="evidence" value="ECO:0000247"/>
    <property type="project" value="NTNU_SB"/>
</dbReference>
<dbReference type="GO" id="GO:0043231">
    <property type="term" value="C:intracellular membrane-bounded organelle"/>
    <property type="evidence" value="ECO:0000314"/>
    <property type="project" value="HPA"/>
</dbReference>
<dbReference type="GO" id="GO:0005654">
    <property type="term" value="C:nucleoplasm"/>
    <property type="evidence" value="ECO:0000314"/>
    <property type="project" value="HPA"/>
</dbReference>
<dbReference type="GO" id="GO:0005634">
    <property type="term" value="C:nucleus"/>
    <property type="evidence" value="ECO:0000318"/>
    <property type="project" value="GO_Central"/>
</dbReference>
<dbReference type="GO" id="GO:0000987">
    <property type="term" value="F:cis-regulatory region sequence-specific DNA binding"/>
    <property type="evidence" value="ECO:0000318"/>
    <property type="project" value="GO_Central"/>
</dbReference>
<dbReference type="GO" id="GO:0003700">
    <property type="term" value="F:DNA-binding transcription factor activity"/>
    <property type="evidence" value="ECO:0000318"/>
    <property type="project" value="GO_Central"/>
</dbReference>
<dbReference type="GO" id="GO:0000981">
    <property type="term" value="F:DNA-binding transcription factor activity, RNA polymerase II-specific"/>
    <property type="evidence" value="ECO:0000247"/>
    <property type="project" value="NTNU_SB"/>
</dbReference>
<dbReference type="GO" id="GO:1990837">
    <property type="term" value="F:sequence-specific double-stranded DNA binding"/>
    <property type="evidence" value="ECO:0000314"/>
    <property type="project" value="ARUK-UCL"/>
</dbReference>
<dbReference type="GO" id="GO:0006355">
    <property type="term" value="P:regulation of DNA-templated transcription"/>
    <property type="evidence" value="ECO:0000318"/>
    <property type="project" value="GO_Central"/>
</dbReference>
<dbReference type="GO" id="GO:0035914">
    <property type="term" value="P:skeletal muscle cell differentiation"/>
    <property type="evidence" value="ECO:0007669"/>
    <property type="project" value="Ensembl"/>
</dbReference>
<dbReference type="CDD" id="cd20058">
    <property type="entry name" value="FH_FOXN2"/>
    <property type="match status" value="1"/>
</dbReference>
<dbReference type="FunFam" id="1.10.10.10:FF:000341">
    <property type="entry name" value="Forkhead box protein N2"/>
    <property type="match status" value="1"/>
</dbReference>
<dbReference type="Gene3D" id="1.10.10.10">
    <property type="entry name" value="Winged helix-like DNA-binding domain superfamily/Winged helix DNA-binding domain"/>
    <property type="match status" value="1"/>
</dbReference>
<dbReference type="InterPro" id="IPR047403">
    <property type="entry name" value="FH_FOXN2"/>
</dbReference>
<dbReference type="InterPro" id="IPR001766">
    <property type="entry name" value="Fork_head_dom"/>
</dbReference>
<dbReference type="InterPro" id="IPR047119">
    <property type="entry name" value="FOXN2/3-like"/>
</dbReference>
<dbReference type="InterPro" id="IPR018122">
    <property type="entry name" value="TF_fork_head_CS_1"/>
</dbReference>
<dbReference type="InterPro" id="IPR030456">
    <property type="entry name" value="TF_fork_head_CS_2"/>
</dbReference>
<dbReference type="InterPro" id="IPR036388">
    <property type="entry name" value="WH-like_DNA-bd_sf"/>
</dbReference>
<dbReference type="InterPro" id="IPR036390">
    <property type="entry name" value="WH_DNA-bd_sf"/>
</dbReference>
<dbReference type="PANTHER" id="PTHR13962:SF19">
    <property type="entry name" value="FORKHEAD BOX PROTEIN N2"/>
    <property type="match status" value="1"/>
</dbReference>
<dbReference type="PANTHER" id="PTHR13962">
    <property type="entry name" value="FORKHEAD BOX PROTEIN N3-LIKE PROTEIN-RELATED"/>
    <property type="match status" value="1"/>
</dbReference>
<dbReference type="Pfam" id="PF00250">
    <property type="entry name" value="Forkhead"/>
    <property type="match status" value="1"/>
</dbReference>
<dbReference type="PRINTS" id="PR00053">
    <property type="entry name" value="FORKHEAD"/>
</dbReference>
<dbReference type="SMART" id="SM00339">
    <property type="entry name" value="FH"/>
    <property type="match status" value="1"/>
</dbReference>
<dbReference type="SUPFAM" id="SSF46785">
    <property type="entry name" value="Winged helix' DNA-binding domain"/>
    <property type="match status" value="1"/>
</dbReference>
<dbReference type="PROSITE" id="PS00657">
    <property type="entry name" value="FORK_HEAD_1"/>
    <property type="match status" value="1"/>
</dbReference>
<dbReference type="PROSITE" id="PS00658">
    <property type="entry name" value="FORK_HEAD_2"/>
    <property type="match status" value="1"/>
</dbReference>
<dbReference type="PROSITE" id="PS50039">
    <property type="entry name" value="FORK_HEAD_3"/>
    <property type="match status" value="1"/>
</dbReference>
<comment type="function">
    <text>Binds to the purine-rich region in HTLV-I LTR.</text>
</comment>
<comment type="interaction">
    <interactant intactId="EBI-10706164">
        <id>P32314</id>
    </interactant>
    <interactant intactId="EBI-355189">
        <id>Q9UKB1</id>
        <label>FBXW11</label>
    </interactant>
    <organismsDiffer>false</organismsDiffer>
    <experiments>6</experiments>
</comment>
<comment type="interaction">
    <interactant intactId="EBI-10706164">
        <id>P32314</id>
    </interactant>
    <interactant intactId="EBI-716037">
        <id>P22670</id>
        <label>RFX1</label>
    </interactant>
    <organismsDiffer>false</organismsDiffer>
    <experiments>5</experiments>
</comment>
<comment type="subcellular location">
    <subcellularLocation>
        <location>Nucleus</location>
    </subcellularLocation>
</comment>
<comment type="alternative products">
    <event type="alternative splicing"/>
    <isoform>
        <id>P32314-1</id>
        <name>1</name>
        <sequence type="displayed"/>
    </isoform>
    <isoform>
        <id>P32314-2</id>
        <name>2</name>
        <sequence type="described" ref="VSP_035743 VSP_035744"/>
    </isoform>
</comment>
<protein>
    <recommendedName>
        <fullName>Forkhead box protein N2</fullName>
    </recommendedName>
    <alternativeName>
        <fullName>Human T-cell leukemia virus enhancer factor</fullName>
    </alternativeName>
</protein>
<accession>P32314</accession>
<accession>Q15769</accession>
<accession>Q6P4Q2</accession>
<organism>
    <name type="scientific">Homo sapiens</name>
    <name type="common">Human</name>
    <dbReference type="NCBI Taxonomy" id="9606"/>
    <lineage>
        <taxon>Eukaryota</taxon>
        <taxon>Metazoa</taxon>
        <taxon>Chordata</taxon>
        <taxon>Craniata</taxon>
        <taxon>Vertebrata</taxon>
        <taxon>Euteleostomi</taxon>
        <taxon>Mammalia</taxon>
        <taxon>Eutheria</taxon>
        <taxon>Euarchontoglires</taxon>
        <taxon>Primates</taxon>
        <taxon>Haplorrhini</taxon>
        <taxon>Catarrhini</taxon>
        <taxon>Hominidae</taxon>
        <taxon>Homo</taxon>
    </lineage>
</organism>
<sequence length="431" mass="47161">MGPVIGMTPDKRAETPGAEKIAGLSQIYKMGSLPEAVDAARPKATLVDSESADDELTNLNWLHESTNLLTNFSLGSEGLPIVSPLYDIEGDDVPSFGPACYQNPEKKSATSKPPYSFSLLIYMAIEHSPNKCLPVKEIYSWILDHFPYFATAPTGWKNSVRHNLSLNKCFQKVERSHGKVNGKGSLWCVDPEYKPNLIQALKKQPFSSASSQNGSLSPHYLSSVIKQNQVRNLKESDIDAAAAMMLLNTSIEQGILECEKPLPLKTALQKKRSYGNAFHHPSAVRLQESDSLATSIDPKEDHNYSASSMAAQRCASRSSVSSLSSVDEVYEFIPKNSHVGSDGSEGFHSEEDTDVDYEDDPLGDSGYASQPCAKISEKGQSGKKMRKQTCQEIDEELKEAAGSLLHLAGIRTCLGSLISTAKTQNQKQRKK</sequence>
<evidence type="ECO:0000255" key="1">
    <source>
        <dbReference type="PROSITE-ProRule" id="PRU00089"/>
    </source>
</evidence>
<evidence type="ECO:0000256" key="2">
    <source>
        <dbReference type="SAM" id="MobiDB-lite"/>
    </source>
</evidence>
<evidence type="ECO:0000303" key="3">
    <source>
    </source>
</evidence>
<proteinExistence type="evidence at protein level"/>
<reference key="1">
    <citation type="journal article" date="1992" name="Genomics">
        <title>Characterization and chromosomal mapping of the gene encoding the cellular DNA binding protein HTLF.</title>
        <authorList>
            <person name="Li C."/>
            <person name="Lusis A.J."/>
            <person name="Sparkes R."/>
            <person name="Tran S.-M."/>
            <person name="Gaynor R.B."/>
        </authorList>
    </citation>
    <scope>NUCLEOTIDE SEQUENCE [MRNA] (ISOFORM 2)</scope>
</reference>
<reference key="2">
    <citation type="journal article" date="2005" name="Nature">
        <title>Generation and annotation of the DNA sequences of human chromosomes 2 and 4.</title>
        <authorList>
            <person name="Hillier L.W."/>
            <person name="Graves T.A."/>
            <person name="Fulton R.S."/>
            <person name="Fulton L.A."/>
            <person name="Pepin K.H."/>
            <person name="Minx P."/>
            <person name="Wagner-McPherson C."/>
            <person name="Layman D."/>
            <person name="Wylie K."/>
            <person name="Sekhon M."/>
            <person name="Becker M.C."/>
            <person name="Fewell G.A."/>
            <person name="Delehaunty K.D."/>
            <person name="Miner T.L."/>
            <person name="Nash W.E."/>
            <person name="Kremitzki C."/>
            <person name="Oddy L."/>
            <person name="Du H."/>
            <person name="Sun H."/>
            <person name="Bradshaw-Cordum H."/>
            <person name="Ali J."/>
            <person name="Carter J."/>
            <person name="Cordes M."/>
            <person name="Harris A."/>
            <person name="Isak A."/>
            <person name="van Brunt A."/>
            <person name="Nguyen C."/>
            <person name="Du F."/>
            <person name="Courtney L."/>
            <person name="Kalicki J."/>
            <person name="Ozersky P."/>
            <person name="Abbott S."/>
            <person name="Armstrong J."/>
            <person name="Belter E.A."/>
            <person name="Caruso L."/>
            <person name="Cedroni M."/>
            <person name="Cotton M."/>
            <person name="Davidson T."/>
            <person name="Desai A."/>
            <person name="Elliott G."/>
            <person name="Erb T."/>
            <person name="Fronick C."/>
            <person name="Gaige T."/>
            <person name="Haakenson W."/>
            <person name="Haglund K."/>
            <person name="Holmes A."/>
            <person name="Harkins R."/>
            <person name="Kim K."/>
            <person name="Kruchowski S.S."/>
            <person name="Strong C.M."/>
            <person name="Grewal N."/>
            <person name="Goyea E."/>
            <person name="Hou S."/>
            <person name="Levy A."/>
            <person name="Martinka S."/>
            <person name="Mead K."/>
            <person name="McLellan M.D."/>
            <person name="Meyer R."/>
            <person name="Randall-Maher J."/>
            <person name="Tomlinson C."/>
            <person name="Dauphin-Kohlberg S."/>
            <person name="Kozlowicz-Reilly A."/>
            <person name="Shah N."/>
            <person name="Swearengen-Shahid S."/>
            <person name="Snider J."/>
            <person name="Strong J.T."/>
            <person name="Thompson J."/>
            <person name="Yoakum M."/>
            <person name="Leonard S."/>
            <person name="Pearman C."/>
            <person name="Trani L."/>
            <person name="Radionenko M."/>
            <person name="Waligorski J.E."/>
            <person name="Wang C."/>
            <person name="Rock S.M."/>
            <person name="Tin-Wollam A.-M."/>
            <person name="Maupin R."/>
            <person name="Latreille P."/>
            <person name="Wendl M.C."/>
            <person name="Yang S.-P."/>
            <person name="Pohl C."/>
            <person name="Wallis J.W."/>
            <person name="Spieth J."/>
            <person name="Bieri T.A."/>
            <person name="Berkowicz N."/>
            <person name="Nelson J.O."/>
            <person name="Osborne J."/>
            <person name="Ding L."/>
            <person name="Meyer R."/>
            <person name="Sabo A."/>
            <person name="Shotland Y."/>
            <person name="Sinha P."/>
            <person name="Wohldmann P.E."/>
            <person name="Cook L.L."/>
            <person name="Hickenbotham M.T."/>
            <person name="Eldred J."/>
            <person name="Williams D."/>
            <person name="Jones T.A."/>
            <person name="She X."/>
            <person name="Ciccarelli F.D."/>
            <person name="Izaurralde E."/>
            <person name="Taylor J."/>
            <person name="Schmutz J."/>
            <person name="Myers R.M."/>
            <person name="Cox D.R."/>
            <person name="Huang X."/>
            <person name="McPherson J.D."/>
            <person name="Mardis E.R."/>
            <person name="Clifton S.W."/>
            <person name="Warren W.C."/>
            <person name="Chinwalla A.T."/>
            <person name="Eddy S.R."/>
            <person name="Marra M.A."/>
            <person name="Ovcharenko I."/>
            <person name="Furey T.S."/>
            <person name="Miller W."/>
            <person name="Eichler E.E."/>
            <person name="Bork P."/>
            <person name="Suyama M."/>
            <person name="Torrents D."/>
            <person name="Waterston R.H."/>
            <person name="Wilson R.K."/>
        </authorList>
    </citation>
    <scope>NUCLEOTIDE SEQUENCE [LARGE SCALE GENOMIC DNA]</scope>
</reference>
<reference key="3">
    <citation type="journal article" date="2004" name="Genome Res.">
        <title>The status, quality, and expansion of the NIH full-length cDNA project: the Mammalian Gene Collection (MGC).</title>
        <authorList>
            <consortium name="The MGC Project Team"/>
        </authorList>
    </citation>
    <scope>NUCLEOTIDE SEQUENCE [LARGE SCALE MRNA] (ISOFORM 1)</scope>
    <source>
        <tissue>Placenta</tissue>
    </source>
</reference>
<gene>
    <name type="primary">FOXN2</name>
    <name type="synonym">HTLF</name>
</gene>